<dbReference type="EC" id="1.8.4.8" evidence="1"/>
<dbReference type="EMBL" id="CP001127">
    <property type="protein sequence ID" value="ACF92245.1"/>
    <property type="molecule type" value="Genomic_DNA"/>
</dbReference>
<dbReference type="RefSeq" id="WP_000080397.1">
    <property type="nucleotide sequence ID" value="NC_011094.1"/>
</dbReference>
<dbReference type="SMR" id="B4TTX7"/>
<dbReference type="KEGG" id="sew:SeSA_A3100"/>
<dbReference type="HOGENOM" id="CLU_044089_3_0_6"/>
<dbReference type="UniPathway" id="UPA00140">
    <property type="reaction ID" value="UER00206"/>
</dbReference>
<dbReference type="Proteomes" id="UP000001865">
    <property type="component" value="Chromosome"/>
</dbReference>
<dbReference type="GO" id="GO:0005737">
    <property type="term" value="C:cytoplasm"/>
    <property type="evidence" value="ECO:0007669"/>
    <property type="project" value="UniProtKB-SubCell"/>
</dbReference>
<dbReference type="GO" id="GO:0004604">
    <property type="term" value="F:phosphoadenylyl-sulfate reductase (thioredoxin) activity"/>
    <property type="evidence" value="ECO:0007669"/>
    <property type="project" value="UniProtKB-UniRule"/>
</dbReference>
<dbReference type="GO" id="GO:0070814">
    <property type="term" value="P:hydrogen sulfide biosynthetic process"/>
    <property type="evidence" value="ECO:0007669"/>
    <property type="project" value="UniProtKB-UniRule"/>
</dbReference>
<dbReference type="GO" id="GO:0019379">
    <property type="term" value="P:sulfate assimilation, phosphoadenylyl sulfate reduction by phosphoadenylyl-sulfate reductase (thioredoxin)"/>
    <property type="evidence" value="ECO:0007669"/>
    <property type="project" value="UniProtKB-UniRule"/>
</dbReference>
<dbReference type="CDD" id="cd23945">
    <property type="entry name" value="PAPS_reductase"/>
    <property type="match status" value="1"/>
</dbReference>
<dbReference type="FunFam" id="3.40.50.620:FF:000043">
    <property type="entry name" value="Phosphoadenosine phosphosulfate reductase"/>
    <property type="match status" value="1"/>
</dbReference>
<dbReference type="Gene3D" id="3.40.50.620">
    <property type="entry name" value="HUPs"/>
    <property type="match status" value="1"/>
</dbReference>
<dbReference type="HAMAP" id="MF_00063">
    <property type="entry name" value="CysH"/>
    <property type="match status" value="1"/>
</dbReference>
<dbReference type="InterPro" id="IPR004511">
    <property type="entry name" value="PAPS/APS_Rdtase"/>
</dbReference>
<dbReference type="InterPro" id="IPR002500">
    <property type="entry name" value="PAPS_reduct_dom"/>
</dbReference>
<dbReference type="InterPro" id="IPR011800">
    <property type="entry name" value="PAPS_reductase_CysH"/>
</dbReference>
<dbReference type="InterPro" id="IPR014729">
    <property type="entry name" value="Rossmann-like_a/b/a_fold"/>
</dbReference>
<dbReference type="NCBIfam" id="TIGR00434">
    <property type="entry name" value="cysH"/>
    <property type="match status" value="1"/>
</dbReference>
<dbReference type="NCBIfam" id="TIGR02057">
    <property type="entry name" value="PAPS_reductase"/>
    <property type="match status" value="1"/>
</dbReference>
<dbReference type="NCBIfam" id="NF002537">
    <property type="entry name" value="PRK02090.1"/>
    <property type="match status" value="1"/>
</dbReference>
<dbReference type="PANTHER" id="PTHR46509">
    <property type="entry name" value="PHOSPHOADENOSINE PHOSPHOSULFATE REDUCTASE"/>
    <property type="match status" value="1"/>
</dbReference>
<dbReference type="PANTHER" id="PTHR46509:SF1">
    <property type="entry name" value="PHOSPHOADENOSINE PHOSPHOSULFATE REDUCTASE"/>
    <property type="match status" value="1"/>
</dbReference>
<dbReference type="Pfam" id="PF01507">
    <property type="entry name" value="PAPS_reduct"/>
    <property type="match status" value="1"/>
</dbReference>
<dbReference type="PIRSF" id="PIRSF000857">
    <property type="entry name" value="PAPS_reductase"/>
    <property type="match status" value="1"/>
</dbReference>
<dbReference type="SUPFAM" id="SSF52402">
    <property type="entry name" value="Adenine nucleotide alpha hydrolases-like"/>
    <property type="match status" value="1"/>
</dbReference>
<accession>B4TTX7</accession>
<protein>
    <recommendedName>
        <fullName evidence="1">Phosphoadenosine 5'-phosphosulfate reductase</fullName>
        <shortName evidence="1">PAPS reductase</shortName>
        <ecNumber evidence="1">1.8.4.8</ecNumber>
    </recommendedName>
    <alternativeName>
        <fullName evidence="1">3'-phosphoadenylylsulfate reductase</fullName>
    </alternativeName>
    <alternativeName>
        <fullName evidence="1">PAPS reductase, thioredoxin dependent</fullName>
    </alternativeName>
    <alternativeName>
        <fullName evidence="1">PAPS sulfotransferase</fullName>
    </alternativeName>
    <alternativeName>
        <fullName evidence="1">PAdoPS reductase</fullName>
    </alternativeName>
</protein>
<feature type="chain" id="PRO_1000092186" description="Phosphoadenosine 5'-phosphosulfate reductase">
    <location>
        <begin position="1"/>
        <end position="244"/>
    </location>
</feature>
<feature type="active site" description="Nucleophile; cysteine thiosulfonate intermediate" evidence="1">
    <location>
        <position position="239"/>
    </location>
</feature>
<keyword id="KW-0963">Cytoplasm</keyword>
<keyword id="KW-0560">Oxidoreductase</keyword>
<gene>
    <name evidence="1" type="primary">cysH</name>
    <name type="ordered locus">SeSA_A3100</name>
</gene>
<proteinExistence type="inferred from homology"/>
<name>CYSH_SALSV</name>
<reference key="1">
    <citation type="journal article" date="2011" name="J. Bacteriol.">
        <title>Comparative genomics of 28 Salmonella enterica isolates: evidence for CRISPR-mediated adaptive sublineage evolution.</title>
        <authorList>
            <person name="Fricke W.F."/>
            <person name="Mammel M.K."/>
            <person name="McDermott P.F."/>
            <person name="Tartera C."/>
            <person name="White D.G."/>
            <person name="Leclerc J.E."/>
            <person name="Ravel J."/>
            <person name="Cebula T.A."/>
        </authorList>
    </citation>
    <scope>NUCLEOTIDE SEQUENCE [LARGE SCALE GENOMIC DNA]</scope>
    <source>
        <strain>CVM19633</strain>
    </source>
</reference>
<sequence>MSQLDLNALNELPKVDRVLALAETNAQLETLTAEERVVWALENLPGEYVLSSSFGIQAAVSLHLVNQIRPDIPVILTDTGYLFPETYQFIDELTDKLKLNLKVYRAGESPAWQEARYGKLWEQGVEGIEKYNDINKVEPMNRALKELNAQTWFAGLRREQSGSRAHLPVLAIQRGVFKVLPIIDWDNRTVYQYLQKHGLKYHPLWDQGYLSVGDTHTTRKWEPGMAEEETRFFGLKRECGLHEG</sequence>
<comment type="function">
    <text evidence="1">Catalyzes the formation of sulfite from phosphoadenosine 5'-phosphosulfate (PAPS) using thioredoxin as an electron donor.</text>
</comment>
<comment type="catalytic activity">
    <reaction evidence="1">
        <text>[thioredoxin]-disulfide + sulfite + adenosine 3',5'-bisphosphate + 2 H(+) = [thioredoxin]-dithiol + 3'-phosphoadenylyl sulfate</text>
        <dbReference type="Rhea" id="RHEA:11724"/>
        <dbReference type="Rhea" id="RHEA-COMP:10698"/>
        <dbReference type="Rhea" id="RHEA-COMP:10700"/>
        <dbReference type="ChEBI" id="CHEBI:15378"/>
        <dbReference type="ChEBI" id="CHEBI:17359"/>
        <dbReference type="ChEBI" id="CHEBI:29950"/>
        <dbReference type="ChEBI" id="CHEBI:50058"/>
        <dbReference type="ChEBI" id="CHEBI:58339"/>
        <dbReference type="ChEBI" id="CHEBI:58343"/>
        <dbReference type="EC" id="1.8.4.8"/>
    </reaction>
</comment>
<comment type="pathway">
    <text evidence="1">Sulfur metabolism; hydrogen sulfide biosynthesis; sulfite from sulfate: step 3/3.</text>
</comment>
<comment type="subcellular location">
    <subcellularLocation>
        <location evidence="1">Cytoplasm</location>
    </subcellularLocation>
</comment>
<comment type="similarity">
    <text evidence="1">Belongs to the PAPS reductase family. CysH subfamily.</text>
</comment>
<evidence type="ECO:0000255" key="1">
    <source>
        <dbReference type="HAMAP-Rule" id="MF_00063"/>
    </source>
</evidence>
<organism>
    <name type="scientific">Salmonella schwarzengrund (strain CVM19633)</name>
    <dbReference type="NCBI Taxonomy" id="439843"/>
    <lineage>
        <taxon>Bacteria</taxon>
        <taxon>Pseudomonadati</taxon>
        <taxon>Pseudomonadota</taxon>
        <taxon>Gammaproteobacteria</taxon>
        <taxon>Enterobacterales</taxon>
        <taxon>Enterobacteriaceae</taxon>
        <taxon>Salmonella</taxon>
    </lineage>
</organism>